<evidence type="ECO:0000255" key="1">
    <source>
        <dbReference type="HAMAP-Rule" id="MF_00289"/>
    </source>
</evidence>
<evidence type="ECO:0000256" key="2">
    <source>
        <dbReference type="SAM" id="MobiDB-lite"/>
    </source>
</evidence>
<organism>
    <name type="scientific">Saccharomonospora viridis (strain ATCC 15386 / DSM 43017 / JCM 3036 / CCUG 5913 / NBRC 12207 / NCIMB 9602 / P101)</name>
    <name type="common">Thermoactinomyces viridis</name>
    <dbReference type="NCBI Taxonomy" id="471857"/>
    <lineage>
        <taxon>Bacteria</taxon>
        <taxon>Bacillati</taxon>
        <taxon>Actinomycetota</taxon>
        <taxon>Actinomycetes</taxon>
        <taxon>Pseudonocardiales</taxon>
        <taxon>Pseudonocardiaceae</taxon>
        <taxon>Saccharomonospora</taxon>
    </lineage>
</organism>
<proteinExistence type="inferred from homology"/>
<name>PSA_SACVD</name>
<accession>C7MWV6</accession>
<reference key="1">
    <citation type="journal article" date="2009" name="Stand. Genomic Sci.">
        <title>Complete genome sequence of Saccharomonospora viridis type strain (P101).</title>
        <authorList>
            <person name="Pati A."/>
            <person name="Sikorski J."/>
            <person name="Nolan M."/>
            <person name="Lapidus A."/>
            <person name="Copeland A."/>
            <person name="Glavina Del Rio T."/>
            <person name="Lucas S."/>
            <person name="Chen F."/>
            <person name="Tice H."/>
            <person name="Pitluck S."/>
            <person name="Cheng J.F."/>
            <person name="Chertkov O."/>
            <person name="Brettin T."/>
            <person name="Han C."/>
            <person name="Detter J.C."/>
            <person name="Kuske C."/>
            <person name="Bruce D."/>
            <person name="Goodwin L."/>
            <person name="Chain P."/>
            <person name="D'haeseleer P."/>
            <person name="Chen A."/>
            <person name="Palaniappan K."/>
            <person name="Ivanova N."/>
            <person name="Mavromatis K."/>
            <person name="Mikhailova N."/>
            <person name="Rohde M."/>
            <person name="Tindall B.J."/>
            <person name="Goker M."/>
            <person name="Bristow J."/>
            <person name="Eisen J.A."/>
            <person name="Markowitz V."/>
            <person name="Hugenholtz P."/>
            <person name="Kyrpides N.C."/>
            <person name="Klenk H.P."/>
        </authorList>
    </citation>
    <scope>NUCLEOTIDE SEQUENCE [LARGE SCALE GENOMIC DNA]</scope>
    <source>
        <strain>ATCC 15386 / DSM 43017 / JCM 3036 / CCUG 5913 / NBRC 12207 / NCIMB 9602 / P101</strain>
    </source>
</reference>
<comment type="function">
    <text evidence="1">Component of the proteasome core, a large protease complex with broad specificity involved in protein degradation.</text>
</comment>
<comment type="activity regulation">
    <text evidence="1">The formation of the proteasomal ATPase ARC-20S proteasome complex, likely via the docking of the C-termini of ARC into the intersubunit pockets in the alpha-rings, may trigger opening of the gate for substrate entry. Interconversion between the open-gate and close-gate conformations leads to a dynamic regulation of the 20S proteasome proteolysis activity.</text>
</comment>
<comment type="pathway">
    <text evidence="1">Protein degradation; proteasomal Pup-dependent pathway.</text>
</comment>
<comment type="subunit">
    <text evidence="1">The 20S proteasome core is composed of 14 alpha and 14 beta subunits that assemble into four stacked heptameric rings, resulting in a barrel-shaped structure. The two inner rings, each composed of seven catalytic beta subunits, are sandwiched by two outer rings, each composed of seven alpha subunits. The catalytic chamber with the active sites is on the inside of the barrel. Has a gated structure, the ends of the cylinder being occluded by the N-termini of the alpha-subunits. Is capped by the proteasome-associated ATPase, ARC.</text>
</comment>
<comment type="subcellular location">
    <subcellularLocation>
        <location evidence="1">Cytoplasm</location>
    </subcellularLocation>
</comment>
<comment type="similarity">
    <text evidence="1">Belongs to the peptidase T1A family.</text>
</comment>
<gene>
    <name evidence="1" type="primary">prcA</name>
    <name type="ordered locus">Svir_22020</name>
</gene>
<protein>
    <recommendedName>
        <fullName evidence="1">Proteasome subunit alpha</fullName>
    </recommendedName>
    <alternativeName>
        <fullName evidence="1">20S proteasome alpha subunit</fullName>
    </alternativeName>
    <alternativeName>
        <fullName evidence="1">Proteasome core protein PrcA</fullName>
    </alternativeName>
</protein>
<keyword id="KW-0963">Cytoplasm</keyword>
<keyword id="KW-0647">Proteasome</keyword>
<keyword id="KW-1185">Reference proteome</keyword>
<sequence>MTMPLYASPEQLMRERSELARKGIARGRSVVVLKYRGGVLFVAENPSPTLHKVSEIYDRIGFAAVGRYSEFESLRRGGIRHVDLQGYMYDRRDVNARALANVYAQTLSTIFTEQLKPFEVEICVAEVGNNSSEDELYRLTYDGSIVMDEPKFVVMGGQTDAINAKLRETYSDDMELATALAVAVEALRAPSTSGASGNGETEPSKLEVAILDRERPGRKFRRITGAELESLMPAEDERTGSSGGSDKSSGDGEQN</sequence>
<feature type="chain" id="PRO_0000397170" description="Proteasome subunit alpha">
    <location>
        <begin position="1"/>
        <end position="255"/>
    </location>
</feature>
<feature type="region of interest" description="Disordered" evidence="2">
    <location>
        <begin position="190"/>
        <end position="255"/>
    </location>
</feature>
<feature type="compositionally biased region" description="Polar residues" evidence="2">
    <location>
        <begin position="190"/>
        <end position="201"/>
    </location>
</feature>
<feature type="compositionally biased region" description="Basic and acidic residues" evidence="2">
    <location>
        <begin position="202"/>
        <end position="217"/>
    </location>
</feature>
<dbReference type="EMBL" id="CP001683">
    <property type="protein sequence ID" value="ACU97210.1"/>
    <property type="molecule type" value="Genomic_DNA"/>
</dbReference>
<dbReference type="RefSeq" id="WP_015786523.1">
    <property type="nucleotide sequence ID" value="NC_013159.1"/>
</dbReference>
<dbReference type="SMR" id="C7MWV6"/>
<dbReference type="STRING" id="471857.Svir_22020"/>
<dbReference type="KEGG" id="svi:Svir_22020"/>
<dbReference type="eggNOG" id="COG0638">
    <property type="taxonomic scope" value="Bacteria"/>
</dbReference>
<dbReference type="HOGENOM" id="CLU_071031_0_0_11"/>
<dbReference type="UniPathway" id="UPA00997"/>
<dbReference type="Proteomes" id="UP000000841">
    <property type="component" value="Chromosome"/>
</dbReference>
<dbReference type="GO" id="GO:0005737">
    <property type="term" value="C:cytoplasm"/>
    <property type="evidence" value="ECO:0007669"/>
    <property type="project" value="UniProtKB-SubCell"/>
</dbReference>
<dbReference type="GO" id="GO:0019773">
    <property type="term" value="C:proteasome core complex, alpha-subunit complex"/>
    <property type="evidence" value="ECO:0007669"/>
    <property type="project" value="UniProtKB-UniRule"/>
</dbReference>
<dbReference type="GO" id="GO:0004298">
    <property type="term" value="F:threonine-type endopeptidase activity"/>
    <property type="evidence" value="ECO:0007669"/>
    <property type="project" value="InterPro"/>
</dbReference>
<dbReference type="GO" id="GO:0019941">
    <property type="term" value="P:modification-dependent protein catabolic process"/>
    <property type="evidence" value="ECO:0007669"/>
    <property type="project" value="UniProtKB-UniRule"/>
</dbReference>
<dbReference type="GO" id="GO:0010498">
    <property type="term" value="P:proteasomal protein catabolic process"/>
    <property type="evidence" value="ECO:0007669"/>
    <property type="project" value="UniProtKB-UniRule"/>
</dbReference>
<dbReference type="CDD" id="cd01906">
    <property type="entry name" value="proteasome_protease_HslV"/>
    <property type="match status" value="1"/>
</dbReference>
<dbReference type="Gene3D" id="3.60.20.10">
    <property type="entry name" value="Glutamine Phosphoribosylpyrophosphate, subunit 1, domain 1"/>
    <property type="match status" value="1"/>
</dbReference>
<dbReference type="HAMAP" id="MF_00289_B">
    <property type="entry name" value="Proteasome_A_B"/>
    <property type="match status" value="1"/>
</dbReference>
<dbReference type="InterPro" id="IPR029055">
    <property type="entry name" value="Ntn_hydrolases_N"/>
</dbReference>
<dbReference type="InterPro" id="IPR023332">
    <property type="entry name" value="Proteasome_alpha-type"/>
</dbReference>
<dbReference type="InterPro" id="IPR022296">
    <property type="entry name" value="Proteasome_asu_bac"/>
</dbReference>
<dbReference type="InterPro" id="IPR001353">
    <property type="entry name" value="Proteasome_sua/b"/>
</dbReference>
<dbReference type="NCBIfam" id="TIGR03691">
    <property type="entry name" value="20S_bact_alpha"/>
    <property type="match status" value="1"/>
</dbReference>
<dbReference type="Pfam" id="PF00227">
    <property type="entry name" value="Proteasome"/>
    <property type="match status" value="1"/>
</dbReference>
<dbReference type="SUPFAM" id="SSF56235">
    <property type="entry name" value="N-terminal nucleophile aminohydrolases (Ntn hydrolases)"/>
    <property type="match status" value="1"/>
</dbReference>
<dbReference type="PROSITE" id="PS51475">
    <property type="entry name" value="PROTEASOME_ALPHA_2"/>
    <property type="match status" value="1"/>
</dbReference>